<feature type="chain" id="PRO_0000257187" description="UDP-N-acetylmuramoylalanine--D-glutamate ligase">
    <location>
        <begin position="1"/>
        <end position="447"/>
    </location>
</feature>
<feature type="binding site" evidence="1">
    <location>
        <begin position="130"/>
        <end position="136"/>
    </location>
    <ligand>
        <name>ATP</name>
        <dbReference type="ChEBI" id="CHEBI:30616"/>
    </ligand>
</feature>
<evidence type="ECO:0000255" key="1">
    <source>
        <dbReference type="HAMAP-Rule" id="MF_00639"/>
    </source>
</evidence>
<organism>
    <name type="scientific">Oleidesulfovibrio alaskensis (strain ATCC BAA-1058 / DSM 17464 / G20)</name>
    <name type="common">Desulfovibrio alaskensis</name>
    <dbReference type="NCBI Taxonomy" id="207559"/>
    <lineage>
        <taxon>Bacteria</taxon>
        <taxon>Pseudomonadati</taxon>
        <taxon>Thermodesulfobacteriota</taxon>
        <taxon>Desulfovibrionia</taxon>
        <taxon>Desulfovibrionales</taxon>
        <taxon>Desulfovibrionaceae</taxon>
        <taxon>Oleidesulfovibrio</taxon>
    </lineage>
</organism>
<sequence>MHTVIPHTHDTPAAAPVRSGAVAVVVGTGRSGTAAARLLHHLGASVRIVEKDESRVSAEFASLAARLGFDCRYGSHSAEQFAGADILVPSPGVPVASLLPYLDASRPPEIMAEIDLAARCVTSPVLAVTGTSGKTTTVSLCAAMLRAAGKRVFLGGNIGTPLSEYVLDVAAGEAPADVLVLEVSSFQLQTCTTLRPEVAVLINISANHLDYHADMQEYLDAKFRLFALQGPDDLAVLQSGMEELADRYALAARREFFDAVRRFPRTALLGSHNMANIEAAWLACRAFGVTQSQAAQAVEEFAPLEHRLEKVDEVAGVLFVNDSKSTTVDSMKAALESFDRPVLLLCGGKWKGGDLVSLIPVVRRHAKAVGLFGASREIFEHAWADVVPMSWDHDLQTAFRRMTAMAQPGDVVLMSPATSSYDLYSNYKERGGDFKRNVAAWKAERDD</sequence>
<accession>Q313Q5</accession>
<name>MURD_OLEA2</name>
<comment type="function">
    <text evidence="1">Cell wall formation. Catalyzes the addition of glutamate to the nucleotide precursor UDP-N-acetylmuramoyl-L-alanine (UMA).</text>
</comment>
<comment type="catalytic activity">
    <reaction evidence="1">
        <text>UDP-N-acetyl-alpha-D-muramoyl-L-alanine + D-glutamate + ATP = UDP-N-acetyl-alpha-D-muramoyl-L-alanyl-D-glutamate + ADP + phosphate + H(+)</text>
        <dbReference type="Rhea" id="RHEA:16429"/>
        <dbReference type="ChEBI" id="CHEBI:15378"/>
        <dbReference type="ChEBI" id="CHEBI:29986"/>
        <dbReference type="ChEBI" id="CHEBI:30616"/>
        <dbReference type="ChEBI" id="CHEBI:43474"/>
        <dbReference type="ChEBI" id="CHEBI:83898"/>
        <dbReference type="ChEBI" id="CHEBI:83900"/>
        <dbReference type="ChEBI" id="CHEBI:456216"/>
        <dbReference type="EC" id="6.3.2.9"/>
    </reaction>
</comment>
<comment type="pathway">
    <text evidence="1">Cell wall biogenesis; peptidoglycan biosynthesis.</text>
</comment>
<comment type="subcellular location">
    <subcellularLocation>
        <location evidence="1">Cytoplasm</location>
    </subcellularLocation>
</comment>
<comment type="similarity">
    <text evidence="1">Belongs to the MurCDEF family.</text>
</comment>
<dbReference type="EC" id="6.3.2.9" evidence="1"/>
<dbReference type="EMBL" id="CP000112">
    <property type="protein sequence ID" value="ABB37841.1"/>
    <property type="molecule type" value="Genomic_DNA"/>
</dbReference>
<dbReference type="RefSeq" id="WP_011367078.1">
    <property type="nucleotide sequence ID" value="NC_007519.1"/>
</dbReference>
<dbReference type="SMR" id="Q313Q5"/>
<dbReference type="STRING" id="207559.Dde_1040"/>
<dbReference type="KEGG" id="dde:Dde_1040"/>
<dbReference type="eggNOG" id="COG0771">
    <property type="taxonomic scope" value="Bacteria"/>
</dbReference>
<dbReference type="HOGENOM" id="CLU_032540_0_0_7"/>
<dbReference type="UniPathway" id="UPA00219"/>
<dbReference type="Proteomes" id="UP000002710">
    <property type="component" value="Chromosome"/>
</dbReference>
<dbReference type="GO" id="GO:0005737">
    <property type="term" value="C:cytoplasm"/>
    <property type="evidence" value="ECO:0007669"/>
    <property type="project" value="UniProtKB-SubCell"/>
</dbReference>
<dbReference type="GO" id="GO:0005524">
    <property type="term" value="F:ATP binding"/>
    <property type="evidence" value="ECO:0007669"/>
    <property type="project" value="UniProtKB-UniRule"/>
</dbReference>
<dbReference type="GO" id="GO:0008764">
    <property type="term" value="F:UDP-N-acetylmuramoylalanine-D-glutamate ligase activity"/>
    <property type="evidence" value="ECO:0007669"/>
    <property type="project" value="UniProtKB-UniRule"/>
</dbReference>
<dbReference type="GO" id="GO:0051301">
    <property type="term" value="P:cell division"/>
    <property type="evidence" value="ECO:0007669"/>
    <property type="project" value="UniProtKB-KW"/>
</dbReference>
<dbReference type="GO" id="GO:0071555">
    <property type="term" value="P:cell wall organization"/>
    <property type="evidence" value="ECO:0007669"/>
    <property type="project" value="UniProtKB-KW"/>
</dbReference>
<dbReference type="GO" id="GO:0009252">
    <property type="term" value="P:peptidoglycan biosynthetic process"/>
    <property type="evidence" value="ECO:0007669"/>
    <property type="project" value="UniProtKB-UniRule"/>
</dbReference>
<dbReference type="GO" id="GO:0008360">
    <property type="term" value="P:regulation of cell shape"/>
    <property type="evidence" value="ECO:0007669"/>
    <property type="project" value="UniProtKB-KW"/>
</dbReference>
<dbReference type="Gene3D" id="3.90.190.20">
    <property type="entry name" value="Mur ligase, C-terminal domain"/>
    <property type="match status" value="1"/>
</dbReference>
<dbReference type="Gene3D" id="3.40.1190.10">
    <property type="entry name" value="Mur-like, catalytic domain"/>
    <property type="match status" value="1"/>
</dbReference>
<dbReference type="Gene3D" id="3.40.50.720">
    <property type="entry name" value="NAD(P)-binding Rossmann-like Domain"/>
    <property type="match status" value="1"/>
</dbReference>
<dbReference type="HAMAP" id="MF_00639">
    <property type="entry name" value="MurD"/>
    <property type="match status" value="1"/>
</dbReference>
<dbReference type="InterPro" id="IPR036565">
    <property type="entry name" value="Mur-like_cat_sf"/>
</dbReference>
<dbReference type="InterPro" id="IPR004101">
    <property type="entry name" value="Mur_ligase_C"/>
</dbReference>
<dbReference type="InterPro" id="IPR036615">
    <property type="entry name" value="Mur_ligase_C_dom_sf"/>
</dbReference>
<dbReference type="InterPro" id="IPR013221">
    <property type="entry name" value="Mur_ligase_cen"/>
</dbReference>
<dbReference type="InterPro" id="IPR005762">
    <property type="entry name" value="MurD"/>
</dbReference>
<dbReference type="InterPro" id="IPR036291">
    <property type="entry name" value="NAD(P)-bd_dom_sf"/>
</dbReference>
<dbReference type="NCBIfam" id="TIGR01087">
    <property type="entry name" value="murD"/>
    <property type="match status" value="1"/>
</dbReference>
<dbReference type="PANTHER" id="PTHR43692">
    <property type="entry name" value="UDP-N-ACETYLMURAMOYLALANINE--D-GLUTAMATE LIGASE"/>
    <property type="match status" value="1"/>
</dbReference>
<dbReference type="PANTHER" id="PTHR43692:SF1">
    <property type="entry name" value="UDP-N-ACETYLMURAMOYLALANINE--D-GLUTAMATE LIGASE"/>
    <property type="match status" value="1"/>
</dbReference>
<dbReference type="Pfam" id="PF02875">
    <property type="entry name" value="Mur_ligase_C"/>
    <property type="match status" value="1"/>
</dbReference>
<dbReference type="Pfam" id="PF08245">
    <property type="entry name" value="Mur_ligase_M"/>
    <property type="match status" value="1"/>
</dbReference>
<dbReference type="Pfam" id="PF21799">
    <property type="entry name" value="MurD-like_N"/>
    <property type="match status" value="1"/>
</dbReference>
<dbReference type="SUPFAM" id="SSF53623">
    <property type="entry name" value="MurD-like peptide ligases, catalytic domain"/>
    <property type="match status" value="1"/>
</dbReference>
<dbReference type="SUPFAM" id="SSF53244">
    <property type="entry name" value="MurD-like peptide ligases, peptide-binding domain"/>
    <property type="match status" value="1"/>
</dbReference>
<dbReference type="SUPFAM" id="SSF51735">
    <property type="entry name" value="NAD(P)-binding Rossmann-fold domains"/>
    <property type="match status" value="1"/>
</dbReference>
<proteinExistence type="inferred from homology"/>
<keyword id="KW-0067">ATP-binding</keyword>
<keyword id="KW-0131">Cell cycle</keyword>
<keyword id="KW-0132">Cell division</keyword>
<keyword id="KW-0133">Cell shape</keyword>
<keyword id="KW-0961">Cell wall biogenesis/degradation</keyword>
<keyword id="KW-0963">Cytoplasm</keyword>
<keyword id="KW-0436">Ligase</keyword>
<keyword id="KW-0547">Nucleotide-binding</keyword>
<keyword id="KW-0573">Peptidoglycan synthesis</keyword>
<keyword id="KW-1185">Reference proteome</keyword>
<protein>
    <recommendedName>
        <fullName evidence="1">UDP-N-acetylmuramoylalanine--D-glutamate ligase</fullName>
        <ecNumber evidence="1">6.3.2.9</ecNumber>
    </recommendedName>
    <alternativeName>
        <fullName evidence="1">D-glutamic acid-adding enzyme</fullName>
    </alternativeName>
    <alternativeName>
        <fullName evidence="1">UDP-N-acetylmuramoyl-L-alanyl-D-glutamate synthetase</fullName>
    </alternativeName>
</protein>
<reference key="1">
    <citation type="journal article" date="2011" name="J. Bacteriol.">
        <title>Complete genome sequence and updated annotation of Desulfovibrio alaskensis G20.</title>
        <authorList>
            <person name="Hauser L.J."/>
            <person name="Land M.L."/>
            <person name="Brown S.D."/>
            <person name="Larimer F."/>
            <person name="Keller K.L."/>
            <person name="Rapp-Giles B.J."/>
            <person name="Price M.N."/>
            <person name="Lin M."/>
            <person name="Bruce D.C."/>
            <person name="Detter J.C."/>
            <person name="Tapia R."/>
            <person name="Han C.S."/>
            <person name="Goodwin L.A."/>
            <person name="Cheng J.F."/>
            <person name="Pitluck S."/>
            <person name="Copeland A."/>
            <person name="Lucas S."/>
            <person name="Nolan M."/>
            <person name="Lapidus A.L."/>
            <person name="Palumbo A.V."/>
            <person name="Wall J.D."/>
        </authorList>
    </citation>
    <scope>NUCLEOTIDE SEQUENCE [LARGE SCALE GENOMIC DNA]</scope>
    <source>
        <strain>ATCC BAA-1058 / DSM 17464 / G20</strain>
    </source>
</reference>
<gene>
    <name evidence="1" type="primary">murD</name>
    <name type="ordered locus">Dde_1040</name>
</gene>